<comment type="function">
    <text evidence="1">Catalyzes the attachment of serine to tRNA(Ser). Is also able to aminoacylate tRNA(Sec) with serine, to form the misacylated tRNA L-seryl-tRNA(Sec), which will be further converted into selenocysteinyl-tRNA(Sec).</text>
</comment>
<comment type="catalytic activity">
    <reaction evidence="1">
        <text>tRNA(Ser) + L-serine + ATP = L-seryl-tRNA(Ser) + AMP + diphosphate + H(+)</text>
        <dbReference type="Rhea" id="RHEA:12292"/>
        <dbReference type="Rhea" id="RHEA-COMP:9669"/>
        <dbReference type="Rhea" id="RHEA-COMP:9703"/>
        <dbReference type="ChEBI" id="CHEBI:15378"/>
        <dbReference type="ChEBI" id="CHEBI:30616"/>
        <dbReference type="ChEBI" id="CHEBI:33019"/>
        <dbReference type="ChEBI" id="CHEBI:33384"/>
        <dbReference type="ChEBI" id="CHEBI:78442"/>
        <dbReference type="ChEBI" id="CHEBI:78533"/>
        <dbReference type="ChEBI" id="CHEBI:456215"/>
        <dbReference type="EC" id="6.1.1.11"/>
    </reaction>
</comment>
<comment type="catalytic activity">
    <reaction evidence="1">
        <text>tRNA(Sec) + L-serine + ATP = L-seryl-tRNA(Sec) + AMP + diphosphate + H(+)</text>
        <dbReference type="Rhea" id="RHEA:42580"/>
        <dbReference type="Rhea" id="RHEA-COMP:9742"/>
        <dbReference type="Rhea" id="RHEA-COMP:10128"/>
        <dbReference type="ChEBI" id="CHEBI:15378"/>
        <dbReference type="ChEBI" id="CHEBI:30616"/>
        <dbReference type="ChEBI" id="CHEBI:33019"/>
        <dbReference type="ChEBI" id="CHEBI:33384"/>
        <dbReference type="ChEBI" id="CHEBI:78442"/>
        <dbReference type="ChEBI" id="CHEBI:78533"/>
        <dbReference type="ChEBI" id="CHEBI:456215"/>
        <dbReference type="EC" id="6.1.1.11"/>
    </reaction>
</comment>
<comment type="pathway">
    <text evidence="1">Aminoacyl-tRNA biosynthesis; selenocysteinyl-tRNA(Sec) biosynthesis; L-seryl-tRNA(Sec) from L-serine and tRNA(Sec): step 1/1.</text>
</comment>
<comment type="subunit">
    <text evidence="1">Homodimer. The tRNA molecule binds across the dimer.</text>
</comment>
<comment type="subcellular location">
    <subcellularLocation>
        <location evidence="1">Cytoplasm</location>
    </subcellularLocation>
</comment>
<comment type="domain">
    <text evidence="1">Consists of two distinct domains, a catalytic core and a N-terminal extension that is involved in tRNA binding.</text>
</comment>
<comment type="similarity">
    <text evidence="1">Belongs to the class-II aminoacyl-tRNA synthetase family. Type-1 seryl-tRNA synthetase subfamily.</text>
</comment>
<name>SYS_STAAC</name>
<reference key="1">
    <citation type="journal article" date="2005" name="J. Bacteriol.">
        <title>Insights on evolution of virulence and resistance from the complete genome analysis of an early methicillin-resistant Staphylococcus aureus strain and a biofilm-producing methicillin-resistant Staphylococcus epidermidis strain.</title>
        <authorList>
            <person name="Gill S.R."/>
            <person name="Fouts D.E."/>
            <person name="Archer G.L."/>
            <person name="Mongodin E.F."/>
            <person name="DeBoy R.T."/>
            <person name="Ravel J."/>
            <person name="Paulsen I.T."/>
            <person name="Kolonay J.F."/>
            <person name="Brinkac L.M."/>
            <person name="Beanan M.J."/>
            <person name="Dodson R.J."/>
            <person name="Daugherty S.C."/>
            <person name="Madupu R."/>
            <person name="Angiuoli S.V."/>
            <person name="Durkin A.S."/>
            <person name="Haft D.H."/>
            <person name="Vamathevan J.J."/>
            <person name="Khouri H."/>
            <person name="Utterback T.R."/>
            <person name="Lee C."/>
            <person name="Dimitrov G."/>
            <person name="Jiang L."/>
            <person name="Qin H."/>
            <person name="Weidman J."/>
            <person name="Tran K."/>
            <person name="Kang K.H."/>
            <person name="Hance I.R."/>
            <person name="Nelson K.E."/>
            <person name="Fraser C.M."/>
        </authorList>
    </citation>
    <scope>NUCLEOTIDE SEQUENCE [LARGE SCALE GENOMIC DNA]</scope>
    <source>
        <strain>COL</strain>
    </source>
</reference>
<dbReference type="EC" id="6.1.1.11" evidence="1"/>
<dbReference type="EMBL" id="CP000046">
    <property type="protein sequence ID" value="AAW37397.1"/>
    <property type="molecule type" value="Genomic_DNA"/>
</dbReference>
<dbReference type="RefSeq" id="WP_000884334.1">
    <property type="nucleotide sequence ID" value="NZ_JBGOFO010000001.1"/>
</dbReference>
<dbReference type="SMR" id="Q5HJY7"/>
<dbReference type="KEGG" id="sac:SACOL0009"/>
<dbReference type="HOGENOM" id="CLU_023797_1_1_9"/>
<dbReference type="UniPathway" id="UPA00906">
    <property type="reaction ID" value="UER00895"/>
</dbReference>
<dbReference type="Proteomes" id="UP000000530">
    <property type="component" value="Chromosome"/>
</dbReference>
<dbReference type="GO" id="GO:0005737">
    <property type="term" value="C:cytoplasm"/>
    <property type="evidence" value="ECO:0007669"/>
    <property type="project" value="UniProtKB-SubCell"/>
</dbReference>
<dbReference type="GO" id="GO:0005524">
    <property type="term" value="F:ATP binding"/>
    <property type="evidence" value="ECO:0007669"/>
    <property type="project" value="UniProtKB-UniRule"/>
</dbReference>
<dbReference type="GO" id="GO:0140096">
    <property type="term" value="F:catalytic activity, acting on a protein"/>
    <property type="evidence" value="ECO:0007669"/>
    <property type="project" value="UniProtKB-ARBA"/>
</dbReference>
<dbReference type="GO" id="GO:0004828">
    <property type="term" value="F:serine-tRNA ligase activity"/>
    <property type="evidence" value="ECO:0007669"/>
    <property type="project" value="UniProtKB-UniRule"/>
</dbReference>
<dbReference type="GO" id="GO:0016740">
    <property type="term" value="F:transferase activity"/>
    <property type="evidence" value="ECO:0007669"/>
    <property type="project" value="UniProtKB-ARBA"/>
</dbReference>
<dbReference type="GO" id="GO:0016260">
    <property type="term" value="P:selenocysteine biosynthetic process"/>
    <property type="evidence" value="ECO:0007669"/>
    <property type="project" value="UniProtKB-UniRule"/>
</dbReference>
<dbReference type="GO" id="GO:0006434">
    <property type="term" value="P:seryl-tRNA aminoacylation"/>
    <property type="evidence" value="ECO:0007669"/>
    <property type="project" value="UniProtKB-UniRule"/>
</dbReference>
<dbReference type="CDD" id="cd00770">
    <property type="entry name" value="SerRS_core"/>
    <property type="match status" value="1"/>
</dbReference>
<dbReference type="Gene3D" id="3.30.930.10">
    <property type="entry name" value="Bira Bifunctional Protein, Domain 2"/>
    <property type="match status" value="1"/>
</dbReference>
<dbReference type="Gene3D" id="1.10.287.40">
    <property type="entry name" value="Serine-tRNA synthetase, tRNA binding domain"/>
    <property type="match status" value="1"/>
</dbReference>
<dbReference type="HAMAP" id="MF_00176">
    <property type="entry name" value="Ser_tRNA_synth_type1"/>
    <property type="match status" value="1"/>
</dbReference>
<dbReference type="InterPro" id="IPR002314">
    <property type="entry name" value="aa-tRNA-synt_IIb"/>
</dbReference>
<dbReference type="InterPro" id="IPR006195">
    <property type="entry name" value="aa-tRNA-synth_II"/>
</dbReference>
<dbReference type="InterPro" id="IPR045864">
    <property type="entry name" value="aa-tRNA-synth_II/BPL/LPL"/>
</dbReference>
<dbReference type="InterPro" id="IPR002317">
    <property type="entry name" value="Ser-tRNA-ligase_type_1"/>
</dbReference>
<dbReference type="InterPro" id="IPR015866">
    <property type="entry name" value="Ser-tRNA-synth_1_N"/>
</dbReference>
<dbReference type="InterPro" id="IPR042103">
    <property type="entry name" value="SerRS_1_N_sf"/>
</dbReference>
<dbReference type="InterPro" id="IPR033729">
    <property type="entry name" value="SerRS_core"/>
</dbReference>
<dbReference type="InterPro" id="IPR010978">
    <property type="entry name" value="tRNA-bd_arm"/>
</dbReference>
<dbReference type="NCBIfam" id="TIGR00414">
    <property type="entry name" value="serS"/>
    <property type="match status" value="1"/>
</dbReference>
<dbReference type="PANTHER" id="PTHR43697:SF1">
    <property type="entry name" value="SERINE--TRNA LIGASE"/>
    <property type="match status" value="1"/>
</dbReference>
<dbReference type="PANTHER" id="PTHR43697">
    <property type="entry name" value="SERYL-TRNA SYNTHETASE"/>
    <property type="match status" value="1"/>
</dbReference>
<dbReference type="Pfam" id="PF02403">
    <property type="entry name" value="Seryl_tRNA_N"/>
    <property type="match status" value="1"/>
</dbReference>
<dbReference type="Pfam" id="PF00587">
    <property type="entry name" value="tRNA-synt_2b"/>
    <property type="match status" value="1"/>
</dbReference>
<dbReference type="PIRSF" id="PIRSF001529">
    <property type="entry name" value="Ser-tRNA-synth_IIa"/>
    <property type="match status" value="1"/>
</dbReference>
<dbReference type="PRINTS" id="PR00981">
    <property type="entry name" value="TRNASYNTHSER"/>
</dbReference>
<dbReference type="SUPFAM" id="SSF55681">
    <property type="entry name" value="Class II aaRS and biotin synthetases"/>
    <property type="match status" value="1"/>
</dbReference>
<dbReference type="SUPFAM" id="SSF46589">
    <property type="entry name" value="tRNA-binding arm"/>
    <property type="match status" value="1"/>
</dbReference>
<dbReference type="PROSITE" id="PS50862">
    <property type="entry name" value="AA_TRNA_LIGASE_II"/>
    <property type="match status" value="1"/>
</dbReference>
<proteinExistence type="inferred from homology"/>
<evidence type="ECO:0000255" key="1">
    <source>
        <dbReference type="HAMAP-Rule" id="MF_00176"/>
    </source>
</evidence>
<accession>Q5HJY7</accession>
<sequence>MLDIRLFRNEPDTVKSKIELRGDDPKVVDEILELDEQRRKLISATEEMKARRNKVSEEIALKKRNKENADDVIAEMRTLGDDIKEKDSQLNEIDNKMTGILCRIPNLISDDVPQGESDEDNVEVKKWGTPREFSFEPKAHWDIVEELKMADFDRAAKVSGARFVYLTNEGAQLERALMNYMITKHTTQHGYTEMMVPQLVNADTMYGTGQLPKFEEDLFKVEKEGLYTIPTAEVPLTNFYRNEIIQPGVLPEKFTGQSACFRSEAGSAGRDTRGLIRLHQFDKVEMVRFEQPEDSWNALEEMTTNAEAILEELGLPYRRVILCTGDIGFSASKTYDLEVWLPSYNDYKEISSCSNCTDFQARRANIRFKRDKAAKPELAHTLNGSGLAVGRTFAAIVENYQNEDGTVTIPEALVPFMGGKTQISKPVK</sequence>
<gene>
    <name evidence="1" type="primary">serS</name>
    <name type="ordered locus">SACOL0009</name>
</gene>
<protein>
    <recommendedName>
        <fullName evidence="1">Serine--tRNA ligase</fullName>
        <ecNumber evidence="1">6.1.1.11</ecNumber>
    </recommendedName>
    <alternativeName>
        <fullName evidence="1">Seryl-tRNA synthetase</fullName>
        <shortName evidence="1">SerRS</shortName>
    </alternativeName>
    <alternativeName>
        <fullName evidence="1">Seryl-tRNA(Ser/Sec) synthetase</fullName>
    </alternativeName>
</protein>
<organism>
    <name type="scientific">Staphylococcus aureus (strain COL)</name>
    <dbReference type="NCBI Taxonomy" id="93062"/>
    <lineage>
        <taxon>Bacteria</taxon>
        <taxon>Bacillati</taxon>
        <taxon>Bacillota</taxon>
        <taxon>Bacilli</taxon>
        <taxon>Bacillales</taxon>
        <taxon>Staphylococcaceae</taxon>
        <taxon>Staphylococcus</taxon>
    </lineage>
</organism>
<feature type="chain" id="PRO_0000122118" description="Serine--tRNA ligase">
    <location>
        <begin position="1"/>
        <end position="428"/>
    </location>
</feature>
<feature type="binding site" evidence="1">
    <location>
        <begin position="231"/>
        <end position="233"/>
    </location>
    <ligand>
        <name>L-serine</name>
        <dbReference type="ChEBI" id="CHEBI:33384"/>
    </ligand>
</feature>
<feature type="binding site" evidence="1">
    <location>
        <begin position="262"/>
        <end position="264"/>
    </location>
    <ligand>
        <name>ATP</name>
        <dbReference type="ChEBI" id="CHEBI:30616"/>
    </ligand>
</feature>
<feature type="binding site" evidence="1">
    <location>
        <position position="285"/>
    </location>
    <ligand>
        <name>L-serine</name>
        <dbReference type="ChEBI" id="CHEBI:33384"/>
    </ligand>
</feature>
<feature type="binding site" evidence="1">
    <location>
        <begin position="349"/>
        <end position="352"/>
    </location>
    <ligand>
        <name>ATP</name>
        <dbReference type="ChEBI" id="CHEBI:30616"/>
    </ligand>
</feature>
<feature type="binding site" evidence="1">
    <location>
        <position position="385"/>
    </location>
    <ligand>
        <name>L-serine</name>
        <dbReference type="ChEBI" id="CHEBI:33384"/>
    </ligand>
</feature>
<keyword id="KW-0030">Aminoacyl-tRNA synthetase</keyword>
<keyword id="KW-0067">ATP-binding</keyword>
<keyword id="KW-0963">Cytoplasm</keyword>
<keyword id="KW-0436">Ligase</keyword>
<keyword id="KW-0547">Nucleotide-binding</keyword>
<keyword id="KW-0648">Protein biosynthesis</keyword>